<gene>
    <name evidence="1" type="primary">recO</name>
    <name type="ordered locus">SPH_0136</name>
</gene>
<organism>
    <name type="scientific">Streptococcus pneumoniae (strain Hungary19A-6)</name>
    <dbReference type="NCBI Taxonomy" id="487214"/>
    <lineage>
        <taxon>Bacteria</taxon>
        <taxon>Bacillati</taxon>
        <taxon>Bacillota</taxon>
        <taxon>Bacilli</taxon>
        <taxon>Lactobacillales</taxon>
        <taxon>Streptococcaceae</taxon>
        <taxon>Streptococcus</taxon>
    </lineage>
</organism>
<reference key="1">
    <citation type="journal article" date="2010" name="Genome Biol.">
        <title>Structure and dynamics of the pan-genome of Streptococcus pneumoniae and closely related species.</title>
        <authorList>
            <person name="Donati C."/>
            <person name="Hiller N.L."/>
            <person name="Tettelin H."/>
            <person name="Muzzi A."/>
            <person name="Croucher N.J."/>
            <person name="Angiuoli S.V."/>
            <person name="Oggioni M."/>
            <person name="Dunning Hotopp J.C."/>
            <person name="Hu F.Z."/>
            <person name="Riley D.R."/>
            <person name="Covacci A."/>
            <person name="Mitchell T.J."/>
            <person name="Bentley S.D."/>
            <person name="Kilian M."/>
            <person name="Ehrlich G.D."/>
            <person name="Rappuoli R."/>
            <person name="Moxon E.R."/>
            <person name="Masignani V."/>
        </authorList>
    </citation>
    <scope>NUCLEOTIDE SEQUENCE [LARGE SCALE GENOMIC DNA]</scope>
    <source>
        <strain>Hungary19A-6</strain>
    </source>
</reference>
<name>RECO_STRPI</name>
<dbReference type="EMBL" id="CP000936">
    <property type="protein sequence ID" value="ACA35616.1"/>
    <property type="molecule type" value="Genomic_DNA"/>
</dbReference>
<dbReference type="RefSeq" id="WP_000616164.1">
    <property type="nucleotide sequence ID" value="NC_010380.1"/>
</dbReference>
<dbReference type="SMR" id="B1I7I6"/>
<dbReference type="GeneID" id="45652453"/>
<dbReference type="KEGG" id="spv:SPH_0136"/>
<dbReference type="HOGENOM" id="CLU_066632_4_0_9"/>
<dbReference type="Proteomes" id="UP000002163">
    <property type="component" value="Chromosome"/>
</dbReference>
<dbReference type="GO" id="GO:0043590">
    <property type="term" value="C:bacterial nucleoid"/>
    <property type="evidence" value="ECO:0007669"/>
    <property type="project" value="TreeGrafter"/>
</dbReference>
<dbReference type="GO" id="GO:0006310">
    <property type="term" value="P:DNA recombination"/>
    <property type="evidence" value="ECO:0007669"/>
    <property type="project" value="UniProtKB-UniRule"/>
</dbReference>
<dbReference type="GO" id="GO:0006302">
    <property type="term" value="P:double-strand break repair"/>
    <property type="evidence" value="ECO:0007669"/>
    <property type="project" value="TreeGrafter"/>
</dbReference>
<dbReference type="Gene3D" id="2.40.50.140">
    <property type="entry name" value="Nucleic acid-binding proteins"/>
    <property type="match status" value="1"/>
</dbReference>
<dbReference type="Gene3D" id="1.20.1440.120">
    <property type="entry name" value="Recombination protein O, C-terminal domain"/>
    <property type="match status" value="1"/>
</dbReference>
<dbReference type="HAMAP" id="MF_00201">
    <property type="entry name" value="RecO"/>
    <property type="match status" value="1"/>
</dbReference>
<dbReference type="InterPro" id="IPR037278">
    <property type="entry name" value="ARFGAP/RecO"/>
</dbReference>
<dbReference type="InterPro" id="IPR022572">
    <property type="entry name" value="DNA_rep/recomb_RecO_N"/>
</dbReference>
<dbReference type="InterPro" id="IPR012340">
    <property type="entry name" value="NA-bd_OB-fold"/>
</dbReference>
<dbReference type="InterPro" id="IPR003717">
    <property type="entry name" value="RecO"/>
</dbReference>
<dbReference type="InterPro" id="IPR042242">
    <property type="entry name" value="RecO_C"/>
</dbReference>
<dbReference type="NCBIfam" id="TIGR00613">
    <property type="entry name" value="reco"/>
    <property type="match status" value="1"/>
</dbReference>
<dbReference type="PANTHER" id="PTHR33991">
    <property type="entry name" value="DNA REPAIR PROTEIN RECO"/>
    <property type="match status" value="1"/>
</dbReference>
<dbReference type="PANTHER" id="PTHR33991:SF1">
    <property type="entry name" value="DNA REPAIR PROTEIN RECO"/>
    <property type="match status" value="1"/>
</dbReference>
<dbReference type="Pfam" id="PF02565">
    <property type="entry name" value="RecO_C"/>
    <property type="match status" value="1"/>
</dbReference>
<dbReference type="Pfam" id="PF11967">
    <property type="entry name" value="RecO_N"/>
    <property type="match status" value="1"/>
</dbReference>
<dbReference type="SUPFAM" id="SSF57863">
    <property type="entry name" value="ArfGap/RecO-like zinc finger"/>
    <property type="match status" value="1"/>
</dbReference>
<dbReference type="SUPFAM" id="SSF50249">
    <property type="entry name" value="Nucleic acid-binding proteins"/>
    <property type="match status" value="1"/>
</dbReference>
<proteinExistence type="inferred from homology"/>
<comment type="function">
    <text evidence="1">Involved in DNA repair and RecF pathway recombination.</text>
</comment>
<comment type="similarity">
    <text evidence="1">Belongs to the RecO family.</text>
</comment>
<evidence type="ECO:0000255" key="1">
    <source>
        <dbReference type="HAMAP-Rule" id="MF_00201"/>
    </source>
</evidence>
<feature type="chain" id="PRO_1000099418" description="DNA repair protein RecO">
    <location>
        <begin position="1"/>
        <end position="256"/>
    </location>
</feature>
<accession>B1I7I6</accession>
<protein>
    <recommendedName>
        <fullName evidence="1">DNA repair protein RecO</fullName>
    </recommendedName>
    <alternativeName>
        <fullName evidence="1">Recombination protein O</fullName>
    </alternativeName>
</protein>
<sequence>MIQSITSQGLVLYNRNFREDDKLVKIFTEQVGKRMFFVKHAGQSKLAPVIQPLVLARFLLRINDDGLSYIEDYHEVMTFPKINSDLFVMAYATYVAALADASLQDNQQDAPLFAFLQKTLELMEAGLDYQVLTNIFEIQILTRFGISLNFNECVFCHRVGQAFDFSFKYGACLCPEHYHEDKRRCHLNPNIPYLLNQFQAIDFETLETISLKPGIKQELRQFMDQLYEEYVGIHLKSKKFIDSLADWGQLLKEEKK</sequence>
<keyword id="KW-0227">DNA damage</keyword>
<keyword id="KW-0233">DNA recombination</keyword>
<keyword id="KW-0234">DNA repair</keyword>